<sequence length="213" mass="23776">MDARILQDNDDTSLPVNQASVTRIHKKPGKAEAEAAVRTLLLWAGEDPDREGLLETPKRVAKAYQELFGGYSESPEEVLGTTFEEVAGYDDMVLVKDISFFSHCEHHMVPIIGKAHVAYLPEGRVVGLSKIARVVDIFARRLQTQESITAQIADSIQRILKPRGVAVMIEAEHMCMAMRSIRKQGSSTITTTFTGDFKEKADQQVRFMTLIRT</sequence>
<proteinExistence type="inferred from homology"/>
<dbReference type="EC" id="3.5.4.16" evidence="1"/>
<dbReference type="EMBL" id="CP001488">
    <property type="protein sequence ID" value="ACO00855.1"/>
    <property type="molecule type" value="Genomic_DNA"/>
</dbReference>
<dbReference type="RefSeq" id="WP_002964194.1">
    <property type="nucleotide sequence ID" value="NC_012441.1"/>
</dbReference>
<dbReference type="SMR" id="C0RJ47"/>
<dbReference type="GeneID" id="93016580"/>
<dbReference type="KEGG" id="bmi:BMEA_A1116"/>
<dbReference type="HOGENOM" id="CLU_049768_3_1_5"/>
<dbReference type="UniPathway" id="UPA00848">
    <property type="reaction ID" value="UER00151"/>
</dbReference>
<dbReference type="Proteomes" id="UP000001748">
    <property type="component" value="Chromosome I"/>
</dbReference>
<dbReference type="GO" id="GO:0005737">
    <property type="term" value="C:cytoplasm"/>
    <property type="evidence" value="ECO:0007669"/>
    <property type="project" value="TreeGrafter"/>
</dbReference>
<dbReference type="GO" id="GO:0005525">
    <property type="term" value="F:GTP binding"/>
    <property type="evidence" value="ECO:0007669"/>
    <property type="project" value="UniProtKB-KW"/>
</dbReference>
<dbReference type="GO" id="GO:0003934">
    <property type="term" value="F:GTP cyclohydrolase I activity"/>
    <property type="evidence" value="ECO:0007669"/>
    <property type="project" value="UniProtKB-UniRule"/>
</dbReference>
<dbReference type="GO" id="GO:0008270">
    <property type="term" value="F:zinc ion binding"/>
    <property type="evidence" value="ECO:0007669"/>
    <property type="project" value="UniProtKB-UniRule"/>
</dbReference>
<dbReference type="GO" id="GO:0006730">
    <property type="term" value="P:one-carbon metabolic process"/>
    <property type="evidence" value="ECO:0007669"/>
    <property type="project" value="UniProtKB-UniRule"/>
</dbReference>
<dbReference type="GO" id="GO:0006729">
    <property type="term" value="P:tetrahydrobiopterin biosynthetic process"/>
    <property type="evidence" value="ECO:0007669"/>
    <property type="project" value="TreeGrafter"/>
</dbReference>
<dbReference type="GO" id="GO:0046654">
    <property type="term" value="P:tetrahydrofolate biosynthetic process"/>
    <property type="evidence" value="ECO:0007669"/>
    <property type="project" value="UniProtKB-UniRule"/>
</dbReference>
<dbReference type="FunFam" id="1.10.286.10:FF:000001">
    <property type="entry name" value="GTP cyclohydrolase 1"/>
    <property type="match status" value="1"/>
</dbReference>
<dbReference type="FunFam" id="3.30.1130.10:FF:000001">
    <property type="entry name" value="GTP cyclohydrolase 1"/>
    <property type="match status" value="1"/>
</dbReference>
<dbReference type="Gene3D" id="1.10.286.10">
    <property type="match status" value="1"/>
</dbReference>
<dbReference type="Gene3D" id="3.30.1130.10">
    <property type="match status" value="1"/>
</dbReference>
<dbReference type="HAMAP" id="MF_00223">
    <property type="entry name" value="FolE"/>
    <property type="match status" value="1"/>
</dbReference>
<dbReference type="InterPro" id="IPR043133">
    <property type="entry name" value="GTP-CH-I_C/QueF"/>
</dbReference>
<dbReference type="InterPro" id="IPR043134">
    <property type="entry name" value="GTP-CH-I_N"/>
</dbReference>
<dbReference type="InterPro" id="IPR001474">
    <property type="entry name" value="GTP_CycHdrlase_I"/>
</dbReference>
<dbReference type="InterPro" id="IPR018234">
    <property type="entry name" value="GTP_CycHdrlase_I_CS"/>
</dbReference>
<dbReference type="InterPro" id="IPR020602">
    <property type="entry name" value="GTP_CycHdrlase_I_dom"/>
</dbReference>
<dbReference type="NCBIfam" id="TIGR00063">
    <property type="entry name" value="folE"/>
    <property type="match status" value="1"/>
</dbReference>
<dbReference type="NCBIfam" id="NF006825">
    <property type="entry name" value="PRK09347.1-2"/>
    <property type="match status" value="1"/>
</dbReference>
<dbReference type="NCBIfam" id="NF006826">
    <property type="entry name" value="PRK09347.1-3"/>
    <property type="match status" value="1"/>
</dbReference>
<dbReference type="PANTHER" id="PTHR11109:SF7">
    <property type="entry name" value="GTP CYCLOHYDROLASE 1"/>
    <property type="match status" value="1"/>
</dbReference>
<dbReference type="PANTHER" id="PTHR11109">
    <property type="entry name" value="GTP CYCLOHYDROLASE I"/>
    <property type="match status" value="1"/>
</dbReference>
<dbReference type="Pfam" id="PF01227">
    <property type="entry name" value="GTP_cyclohydroI"/>
    <property type="match status" value="1"/>
</dbReference>
<dbReference type="SUPFAM" id="SSF55620">
    <property type="entry name" value="Tetrahydrobiopterin biosynthesis enzymes-like"/>
    <property type="match status" value="1"/>
</dbReference>
<dbReference type="PROSITE" id="PS00859">
    <property type="entry name" value="GTP_CYCLOHYDROL_1_1"/>
    <property type="match status" value="1"/>
</dbReference>
<accession>C0RJ47</accession>
<organism>
    <name type="scientific">Brucella melitensis biotype 2 (strain ATCC 23457)</name>
    <dbReference type="NCBI Taxonomy" id="546272"/>
    <lineage>
        <taxon>Bacteria</taxon>
        <taxon>Pseudomonadati</taxon>
        <taxon>Pseudomonadota</taxon>
        <taxon>Alphaproteobacteria</taxon>
        <taxon>Hyphomicrobiales</taxon>
        <taxon>Brucellaceae</taxon>
        <taxon>Brucella/Ochrobactrum group</taxon>
        <taxon>Brucella</taxon>
    </lineage>
</organism>
<protein>
    <recommendedName>
        <fullName evidence="1">GTP cyclohydrolase 1</fullName>
        <ecNumber evidence="1">3.5.4.16</ecNumber>
    </recommendedName>
    <alternativeName>
        <fullName evidence="1">GTP cyclohydrolase I</fullName>
        <shortName evidence="1">GTP-CH-I</shortName>
    </alternativeName>
</protein>
<reference key="1">
    <citation type="submission" date="2009-03" db="EMBL/GenBank/DDBJ databases">
        <title>Brucella melitensis ATCC 23457 whole genome shotgun sequencing project.</title>
        <authorList>
            <person name="Setubal J.C."/>
            <person name="Boyle S."/>
            <person name="Crasta O.R."/>
            <person name="Gillespie J.J."/>
            <person name="Kenyon R.W."/>
            <person name="Lu J."/>
            <person name="Mane S."/>
            <person name="Nagrani S."/>
            <person name="Shallom J.M."/>
            <person name="Shallom S."/>
            <person name="Shukla M."/>
            <person name="Snyder E.E."/>
            <person name="Sobral B.W."/>
            <person name="Wattam A.R."/>
            <person name="Will R."/>
            <person name="Williams K."/>
            <person name="Yoo H."/>
            <person name="Munk C."/>
            <person name="Tapia R."/>
            <person name="Han C."/>
            <person name="Detter J.C."/>
            <person name="Bruce D."/>
            <person name="Brettin T.S."/>
        </authorList>
    </citation>
    <scope>NUCLEOTIDE SEQUENCE [LARGE SCALE GENOMIC DNA]</scope>
    <source>
        <strain>ATCC 23457</strain>
    </source>
</reference>
<feature type="chain" id="PRO_1000124911" description="GTP cyclohydrolase 1">
    <location>
        <begin position="1"/>
        <end position="213"/>
    </location>
</feature>
<feature type="binding site" evidence="1">
    <location>
        <position position="104"/>
    </location>
    <ligand>
        <name>Zn(2+)</name>
        <dbReference type="ChEBI" id="CHEBI:29105"/>
    </ligand>
</feature>
<feature type="binding site" evidence="1">
    <location>
        <position position="107"/>
    </location>
    <ligand>
        <name>Zn(2+)</name>
        <dbReference type="ChEBI" id="CHEBI:29105"/>
    </ligand>
</feature>
<feature type="binding site" evidence="1">
    <location>
        <position position="175"/>
    </location>
    <ligand>
        <name>Zn(2+)</name>
        <dbReference type="ChEBI" id="CHEBI:29105"/>
    </ligand>
</feature>
<evidence type="ECO:0000255" key="1">
    <source>
        <dbReference type="HAMAP-Rule" id="MF_00223"/>
    </source>
</evidence>
<comment type="catalytic activity">
    <reaction evidence="1">
        <text>GTP + H2O = 7,8-dihydroneopterin 3'-triphosphate + formate + H(+)</text>
        <dbReference type="Rhea" id="RHEA:17473"/>
        <dbReference type="ChEBI" id="CHEBI:15377"/>
        <dbReference type="ChEBI" id="CHEBI:15378"/>
        <dbReference type="ChEBI" id="CHEBI:15740"/>
        <dbReference type="ChEBI" id="CHEBI:37565"/>
        <dbReference type="ChEBI" id="CHEBI:58462"/>
        <dbReference type="EC" id="3.5.4.16"/>
    </reaction>
</comment>
<comment type="pathway">
    <text evidence="1">Cofactor biosynthesis; 7,8-dihydroneopterin triphosphate biosynthesis; 7,8-dihydroneopterin triphosphate from GTP: step 1/1.</text>
</comment>
<comment type="subunit">
    <text evidence="1">Homomer.</text>
</comment>
<comment type="similarity">
    <text evidence="1">Belongs to the GTP cyclohydrolase I family.</text>
</comment>
<gene>
    <name evidence="1" type="primary">folE</name>
    <name type="ordered locus">BMEA_A1116</name>
</gene>
<keyword id="KW-0342">GTP-binding</keyword>
<keyword id="KW-0378">Hydrolase</keyword>
<keyword id="KW-0479">Metal-binding</keyword>
<keyword id="KW-0547">Nucleotide-binding</keyword>
<keyword id="KW-0554">One-carbon metabolism</keyword>
<keyword id="KW-0862">Zinc</keyword>
<name>GCH1_BRUMB</name>